<feature type="initiator methionine" description="Removed">
    <location>
        <position position="1"/>
    </location>
</feature>
<feature type="chain" id="PRO_0000159172" description="Ferredoxin 7Fe">
    <location>
        <begin position="2"/>
        <end position="78"/>
    </location>
</feature>
<feature type="domain" description="4Fe-4S ferredoxin-type 1" evidence="1">
    <location>
        <begin position="2"/>
        <end position="29"/>
    </location>
</feature>
<feature type="domain" description="4Fe-4S ferredoxin-type 2" evidence="1">
    <location>
        <begin position="31"/>
        <end position="60"/>
    </location>
</feature>
<feature type="binding site">
    <location>
        <position position="9"/>
    </location>
    <ligand>
        <name>[3Fe-4S] cluster</name>
        <dbReference type="ChEBI" id="CHEBI:21137"/>
    </ligand>
</feature>
<feature type="binding site">
    <location>
        <position position="17"/>
    </location>
    <ligand>
        <name>[3Fe-4S] cluster</name>
        <dbReference type="ChEBI" id="CHEBI:21137"/>
    </ligand>
</feature>
<feature type="binding site">
    <location>
        <position position="21"/>
    </location>
    <ligand>
        <name>[4Fe-4S] cluster</name>
        <dbReference type="ChEBI" id="CHEBI:49883"/>
    </ligand>
</feature>
<feature type="binding site">
    <location>
        <position position="40"/>
    </location>
    <ligand>
        <name>[4Fe-4S] cluster</name>
        <dbReference type="ChEBI" id="CHEBI:49883"/>
    </ligand>
</feature>
<feature type="binding site">
    <location>
        <position position="43"/>
    </location>
    <ligand>
        <name>[4Fe-4S] cluster</name>
        <dbReference type="ChEBI" id="CHEBI:49883"/>
    </ligand>
</feature>
<feature type="binding site">
    <location>
        <position position="46"/>
    </location>
    <ligand>
        <name>[4Fe-4S] cluster</name>
        <dbReference type="ChEBI" id="CHEBI:49883"/>
    </ligand>
</feature>
<feature type="binding site">
    <location>
        <position position="50"/>
    </location>
    <ligand>
        <name>[3Fe-4S] cluster</name>
        <dbReference type="ChEBI" id="CHEBI:21137"/>
    </ligand>
</feature>
<feature type="mutagenesis site" description="Transformation from a 7S to 8S ferredoxin." evidence="2">
    <original>D</original>
    <variation>C</variation>
    <location>
        <position position="14"/>
    </location>
</feature>
<feature type="turn" evidence="3">
    <location>
        <begin position="8"/>
        <end position="11"/>
    </location>
</feature>
<feature type="turn" evidence="3">
    <location>
        <begin position="18"/>
        <end position="20"/>
    </location>
</feature>
<feature type="strand" evidence="3">
    <location>
        <begin position="26"/>
        <end position="28"/>
    </location>
</feature>
<feature type="strand" evidence="3">
    <location>
        <begin position="30"/>
        <end position="35"/>
    </location>
</feature>
<feature type="turn" evidence="3">
    <location>
        <begin position="37"/>
        <end position="39"/>
    </location>
</feature>
<feature type="helix" evidence="3">
    <location>
        <begin position="46"/>
        <end position="49"/>
    </location>
</feature>
<feature type="helix" evidence="3">
    <location>
        <begin position="51"/>
        <end position="53"/>
    </location>
</feature>
<feature type="strand" evidence="3">
    <location>
        <begin position="54"/>
        <end position="57"/>
    </location>
</feature>
<feature type="turn" evidence="3">
    <location>
        <begin position="58"/>
        <end position="60"/>
    </location>
</feature>
<feature type="helix" evidence="3">
    <location>
        <begin position="63"/>
        <end position="75"/>
    </location>
</feature>
<accession>Q45560</accession>
<comment type="cofactor">
    <cofactor>
        <name>[4Fe-4S] cluster</name>
        <dbReference type="ChEBI" id="CHEBI:49883"/>
    </cofactor>
    <text>Binds 1 [4Fe-4S] cluster.</text>
</comment>
<comment type="cofactor">
    <cofactor>
        <name>[3Fe-4S] cluster</name>
        <dbReference type="ChEBI" id="CHEBI:21137"/>
    </cofactor>
    <text>Binds 1 [3Fe-4S] cluster.</text>
</comment>
<comment type="subunit">
    <text>Monomer.</text>
</comment>
<dbReference type="EMBL" id="D29804">
    <property type="protein sequence ID" value="BAA06187.1"/>
    <property type="molecule type" value="Genomic_DNA"/>
</dbReference>
<dbReference type="PIR" id="JC2496">
    <property type="entry name" value="JC2496"/>
</dbReference>
<dbReference type="RefSeq" id="WP_066198812.1">
    <property type="nucleotide sequence ID" value="NZ_CBCSAS010000034.1"/>
</dbReference>
<dbReference type="PDB" id="1BC6">
    <property type="method" value="NMR"/>
    <property type="chains" value="A=2-78"/>
</dbReference>
<dbReference type="PDB" id="1BD6">
    <property type="method" value="NMR"/>
    <property type="chains" value="A=2-78"/>
</dbReference>
<dbReference type="PDB" id="1BQX">
    <property type="method" value="NMR"/>
    <property type="chains" value="A=2-78"/>
</dbReference>
<dbReference type="PDB" id="1BWE">
    <property type="method" value="NMR"/>
    <property type="chains" value="A=2-78"/>
</dbReference>
<dbReference type="PDBsum" id="1BC6"/>
<dbReference type="PDBsum" id="1BD6"/>
<dbReference type="PDBsum" id="1BQX"/>
<dbReference type="PDBsum" id="1BWE"/>
<dbReference type="BMRB" id="Q45560"/>
<dbReference type="SMR" id="Q45560"/>
<dbReference type="STRING" id="1484.SA87_06055"/>
<dbReference type="OrthoDB" id="9798098at2"/>
<dbReference type="EvolutionaryTrace" id="Q45560"/>
<dbReference type="GO" id="GO:0051538">
    <property type="term" value="F:3 iron, 4 sulfur cluster binding"/>
    <property type="evidence" value="ECO:0007669"/>
    <property type="project" value="UniProtKB-KW"/>
</dbReference>
<dbReference type="GO" id="GO:0051539">
    <property type="term" value="F:4 iron, 4 sulfur cluster binding"/>
    <property type="evidence" value="ECO:0007669"/>
    <property type="project" value="UniProtKB-KW"/>
</dbReference>
<dbReference type="GO" id="GO:0009055">
    <property type="term" value="F:electron transfer activity"/>
    <property type="evidence" value="ECO:0007669"/>
    <property type="project" value="InterPro"/>
</dbReference>
<dbReference type="GO" id="GO:0046872">
    <property type="term" value="F:metal ion binding"/>
    <property type="evidence" value="ECO:0007669"/>
    <property type="project" value="UniProtKB-KW"/>
</dbReference>
<dbReference type="Gene3D" id="3.30.70.20">
    <property type="match status" value="1"/>
</dbReference>
<dbReference type="InterPro" id="IPR017896">
    <property type="entry name" value="4Fe4S_Fe-S-bd"/>
</dbReference>
<dbReference type="InterPro" id="IPR017900">
    <property type="entry name" value="4Fe4S_Fe_S_CS"/>
</dbReference>
<dbReference type="InterPro" id="IPR000813">
    <property type="entry name" value="7Fe_ferredoxin"/>
</dbReference>
<dbReference type="InterPro" id="IPR050294">
    <property type="entry name" value="RnfB_subfamily"/>
</dbReference>
<dbReference type="PANTHER" id="PTHR42859:SF2">
    <property type="entry name" value="FERREDOXIN"/>
    <property type="match status" value="1"/>
</dbReference>
<dbReference type="PANTHER" id="PTHR42859">
    <property type="entry name" value="OXIDOREDUCTASE"/>
    <property type="match status" value="1"/>
</dbReference>
<dbReference type="Pfam" id="PF00037">
    <property type="entry name" value="Fer4"/>
    <property type="match status" value="1"/>
</dbReference>
<dbReference type="PRINTS" id="PR00354">
    <property type="entry name" value="7FE8SFRDOXIN"/>
</dbReference>
<dbReference type="SUPFAM" id="SSF54862">
    <property type="entry name" value="4Fe-4S ferredoxins"/>
    <property type="match status" value="1"/>
</dbReference>
<dbReference type="PROSITE" id="PS00198">
    <property type="entry name" value="4FE4S_FER_1"/>
    <property type="match status" value="1"/>
</dbReference>
<dbReference type="PROSITE" id="PS51379">
    <property type="entry name" value="4FE4S_FER_2"/>
    <property type="match status" value="2"/>
</dbReference>
<evidence type="ECO:0000255" key="1">
    <source>
        <dbReference type="PROSITE-ProRule" id="PRU00711"/>
    </source>
</evidence>
<evidence type="ECO:0000269" key="2">
    <source>
    </source>
</evidence>
<evidence type="ECO:0007829" key="3">
    <source>
        <dbReference type="PDB" id="1BC6"/>
    </source>
</evidence>
<organism>
    <name type="scientific">Hydrogenibacillus schlegelii</name>
    <name type="common">Bacillus schlegelii</name>
    <dbReference type="NCBI Taxonomy" id="1484"/>
    <lineage>
        <taxon>Bacteria</taxon>
        <taxon>Bacillati</taxon>
        <taxon>Bacillota</taxon>
        <taxon>Bacilli</taxon>
        <taxon>Bacillales</taxon>
        <taxon>Bacillales Family X. Incertae Sedis</taxon>
        <taxon>Hydrogenibacillus</taxon>
    </lineage>
</organism>
<protein>
    <recommendedName>
        <fullName>Ferredoxin 7Fe</fullName>
    </recommendedName>
    <alternativeName>
        <fullName>Seven-iron ferredoxin</fullName>
    </alternativeName>
</protein>
<name>FER_HYDSH</name>
<reference key="1">
    <citation type="journal article" date="1994" name="Biochem. Biophys. Res. Commun.">
        <title>Cloning and expression of the gene encoding the 7Fe type ferredoxin from a thermophilic hydrogen oxidizing bacterium, Bacillus schlegelii.</title>
        <authorList>
            <person name="Aono S."/>
            <person name="Nakamura S."/>
            <person name="Aono R."/>
            <person name="Okura I."/>
        </authorList>
    </citation>
    <scope>NUCLEOTIDE SEQUENCE [GENOMIC DNA]</scope>
    <source>
        <strain>ATCC 43741 / DSM 2000 / CCUG 26017 / CIP 106933 / NCIMB 13107 / MA-48</strain>
    </source>
</reference>
<reference key="2">
    <citation type="journal article" date="1992" name="J. Biochem.">
        <title>Purification and characterization of a 7Fe ferredoxin from a thermophilic hydrogen-oxidizing bacterium, Bacillus schlegelii.</title>
        <authorList>
            <person name="Aono S."/>
            <person name="Kurita H."/>
            <person name="Uno S."/>
            <person name="Okura I."/>
        </authorList>
    </citation>
    <scope>CHARACTERIZATION</scope>
</reference>
<reference key="3">
    <citation type="journal article" date="1998" name="Biochemistry">
        <title>Solution structure of the oxidized Fe7S8 ferredoxin from the thermophilic bacterium Bacillus schlegelii by 1H NMR spectroscopy.</title>
        <authorList>
            <person name="Aono S."/>
            <person name="Bentrop D."/>
            <person name="Bertini I."/>
            <person name="Donaire A."/>
            <person name="Luchinat C."/>
            <person name="Niikura Y."/>
            <person name="Rosato A."/>
        </authorList>
    </citation>
    <scope>STRUCTURE BY NMR</scope>
    <source>
        <strain>ATCC 43741 / DSM 2000 / CCUG 26017 / CIP 106933 / NCIMB 13107 / MA-48</strain>
    </source>
</reference>
<reference key="4">
    <citation type="journal article" date="1997" name="FEBS Lett.">
        <title>The D13C variant of Bacillus schlegelii 7Fe ferredoxin is an 8Fe ferredoxin as revealed by 1H-NMR spectroscopy.</title>
        <authorList>
            <person name="Aono S."/>
            <person name="Bentrop D."/>
            <person name="Bertini I."/>
            <person name="Luchinat C."/>
            <person name="Macinai R."/>
        </authorList>
    </citation>
    <scope>MUTAGENESIS OF ASP-14</scope>
</reference>
<gene>
    <name type="primary">fdxA</name>
</gene>
<keyword id="KW-0002">3D-structure</keyword>
<keyword id="KW-0003">3Fe-4S</keyword>
<keyword id="KW-0004">4Fe-4S</keyword>
<keyword id="KW-0249">Electron transport</keyword>
<keyword id="KW-0408">Iron</keyword>
<keyword id="KW-0411">Iron-sulfur</keyword>
<keyword id="KW-0479">Metal-binding</keyword>
<keyword id="KW-0677">Repeat</keyword>
<keyword id="KW-0813">Transport</keyword>
<proteinExistence type="evidence at protein level"/>
<sequence length="78" mass="8874">MAYVITEPCIGTKDASCVEVCPVDCIHEGEDQYYIDPDVCIDCGACEAVCPVSAIYHEDFVPEEWKSYIQKNRDFFKK</sequence>